<evidence type="ECO:0000255" key="1">
    <source>
        <dbReference type="HAMAP-Rule" id="MF_00605"/>
    </source>
</evidence>
<gene>
    <name evidence="1" type="primary">trmD</name>
    <name type="ordered locus">PC1_3201</name>
</gene>
<organism>
    <name type="scientific">Pectobacterium carotovorum subsp. carotovorum (strain PC1)</name>
    <dbReference type="NCBI Taxonomy" id="561230"/>
    <lineage>
        <taxon>Bacteria</taxon>
        <taxon>Pseudomonadati</taxon>
        <taxon>Pseudomonadota</taxon>
        <taxon>Gammaproteobacteria</taxon>
        <taxon>Enterobacterales</taxon>
        <taxon>Pectobacteriaceae</taxon>
        <taxon>Pectobacterium</taxon>
    </lineage>
</organism>
<proteinExistence type="inferred from homology"/>
<keyword id="KW-0963">Cytoplasm</keyword>
<keyword id="KW-0489">Methyltransferase</keyword>
<keyword id="KW-0949">S-adenosyl-L-methionine</keyword>
<keyword id="KW-0808">Transferase</keyword>
<keyword id="KW-0819">tRNA processing</keyword>
<comment type="function">
    <text evidence="1">Specifically methylates guanosine-37 in various tRNAs.</text>
</comment>
<comment type="catalytic activity">
    <reaction evidence="1">
        <text>guanosine(37) in tRNA + S-adenosyl-L-methionine = N(1)-methylguanosine(37) in tRNA + S-adenosyl-L-homocysteine + H(+)</text>
        <dbReference type="Rhea" id="RHEA:36899"/>
        <dbReference type="Rhea" id="RHEA-COMP:10145"/>
        <dbReference type="Rhea" id="RHEA-COMP:10147"/>
        <dbReference type="ChEBI" id="CHEBI:15378"/>
        <dbReference type="ChEBI" id="CHEBI:57856"/>
        <dbReference type="ChEBI" id="CHEBI:59789"/>
        <dbReference type="ChEBI" id="CHEBI:73542"/>
        <dbReference type="ChEBI" id="CHEBI:74269"/>
        <dbReference type="EC" id="2.1.1.228"/>
    </reaction>
</comment>
<comment type="subunit">
    <text evidence="1">Homodimer.</text>
</comment>
<comment type="subcellular location">
    <subcellularLocation>
        <location evidence="1">Cytoplasm</location>
    </subcellularLocation>
</comment>
<comment type="similarity">
    <text evidence="1">Belongs to the RNA methyltransferase TrmD family.</text>
</comment>
<accession>C6DCP9</accession>
<dbReference type="EC" id="2.1.1.228" evidence="1"/>
<dbReference type="EMBL" id="CP001657">
    <property type="protein sequence ID" value="ACT14224.1"/>
    <property type="molecule type" value="Genomic_DNA"/>
</dbReference>
<dbReference type="RefSeq" id="WP_015841361.1">
    <property type="nucleotide sequence ID" value="NC_012917.1"/>
</dbReference>
<dbReference type="SMR" id="C6DCP9"/>
<dbReference type="STRING" id="561230.PC1_3201"/>
<dbReference type="GeneID" id="67792996"/>
<dbReference type="KEGG" id="pct:PC1_3201"/>
<dbReference type="eggNOG" id="COG0336">
    <property type="taxonomic scope" value="Bacteria"/>
</dbReference>
<dbReference type="HOGENOM" id="CLU_047363_0_1_6"/>
<dbReference type="OrthoDB" id="9807416at2"/>
<dbReference type="Proteomes" id="UP000002736">
    <property type="component" value="Chromosome"/>
</dbReference>
<dbReference type="GO" id="GO:0005829">
    <property type="term" value="C:cytosol"/>
    <property type="evidence" value="ECO:0007669"/>
    <property type="project" value="TreeGrafter"/>
</dbReference>
<dbReference type="GO" id="GO:0052906">
    <property type="term" value="F:tRNA (guanine(37)-N1)-methyltransferase activity"/>
    <property type="evidence" value="ECO:0007669"/>
    <property type="project" value="UniProtKB-UniRule"/>
</dbReference>
<dbReference type="GO" id="GO:0002939">
    <property type="term" value="P:tRNA N1-guanine methylation"/>
    <property type="evidence" value="ECO:0007669"/>
    <property type="project" value="TreeGrafter"/>
</dbReference>
<dbReference type="CDD" id="cd18080">
    <property type="entry name" value="TrmD-like"/>
    <property type="match status" value="1"/>
</dbReference>
<dbReference type="FunFam" id="1.10.1270.20:FF:000001">
    <property type="entry name" value="tRNA (guanine-N(1)-)-methyltransferase"/>
    <property type="match status" value="1"/>
</dbReference>
<dbReference type="FunFam" id="3.40.1280.10:FF:000001">
    <property type="entry name" value="tRNA (guanine-N(1)-)-methyltransferase"/>
    <property type="match status" value="1"/>
</dbReference>
<dbReference type="Gene3D" id="3.40.1280.10">
    <property type="match status" value="1"/>
</dbReference>
<dbReference type="Gene3D" id="1.10.1270.20">
    <property type="entry name" value="tRNA(m1g37)methyltransferase, domain 2"/>
    <property type="match status" value="1"/>
</dbReference>
<dbReference type="HAMAP" id="MF_00605">
    <property type="entry name" value="TrmD"/>
    <property type="match status" value="1"/>
</dbReference>
<dbReference type="InterPro" id="IPR029028">
    <property type="entry name" value="Alpha/beta_knot_MTases"/>
</dbReference>
<dbReference type="InterPro" id="IPR023148">
    <property type="entry name" value="tRNA_m1G_MeTrfase_C_sf"/>
</dbReference>
<dbReference type="InterPro" id="IPR002649">
    <property type="entry name" value="tRNA_m1G_MeTrfase_TrmD"/>
</dbReference>
<dbReference type="InterPro" id="IPR029026">
    <property type="entry name" value="tRNA_m1G_MTases_N"/>
</dbReference>
<dbReference type="InterPro" id="IPR016009">
    <property type="entry name" value="tRNA_MeTrfase_TRMD/TRM10"/>
</dbReference>
<dbReference type="NCBIfam" id="NF000648">
    <property type="entry name" value="PRK00026.1"/>
    <property type="match status" value="1"/>
</dbReference>
<dbReference type="NCBIfam" id="TIGR00088">
    <property type="entry name" value="trmD"/>
    <property type="match status" value="1"/>
</dbReference>
<dbReference type="PANTHER" id="PTHR46417">
    <property type="entry name" value="TRNA (GUANINE-N(1)-)-METHYLTRANSFERASE"/>
    <property type="match status" value="1"/>
</dbReference>
<dbReference type="PANTHER" id="PTHR46417:SF1">
    <property type="entry name" value="TRNA (GUANINE-N(1)-)-METHYLTRANSFERASE"/>
    <property type="match status" value="1"/>
</dbReference>
<dbReference type="Pfam" id="PF01746">
    <property type="entry name" value="tRNA_m1G_MT"/>
    <property type="match status" value="1"/>
</dbReference>
<dbReference type="PIRSF" id="PIRSF000386">
    <property type="entry name" value="tRNA_mtase"/>
    <property type="match status" value="1"/>
</dbReference>
<dbReference type="SUPFAM" id="SSF75217">
    <property type="entry name" value="alpha/beta knot"/>
    <property type="match status" value="1"/>
</dbReference>
<reference key="1">
    <citation type="submission" date="2009-07" db="EMBL/GenBank/DDBJ databases">
        <title>Complete sequence of Pectobacterium carotovorum subsp. carotovorum PC1.</title>
        <authorList>
            <consortium name="US DOE Joint Genome Institute"/>
            <person name="Lucas S."/>
            <person name="Copeland A."/>
            <person name="Lapidus A."/>
            <person name="Glavina del Rio T."/>
            <person name="Tice H."/>
            <person name="Bruce D."/>
            <person name="Goodwin L."/>
            <person name="Pitluck S."/>
            <person name="Munk A.C."/>
            <person name="Brettin T."/>
            <person name="Detter J.C."/>
            <person name="Han C."/>
            <person name="Tapia R."/>
            <person name="Larimer F."/>
            <person name="Land M."/>
            <person name="Hauser L."/>
            <person name="Kyrpides N."/>
            <person name="Mikhailova N."/>
            <person name="Balakrishnan V."/>
            <person name="Glasner J."/>
            <person name="Perna N.T."/>
        </authorList>
    </citation>
    <scope>NUCLEOTIDE SEQUENCE [LARGE SCALE GENOMIC DNA]</scope>
    <source>
        <strain>PC1</strain>
    </source>
</reference>
<sequence>MWIGVISLFPEMFRAITDYGVTGRAVKNGLLNVQYWSPRDFTYDRHRTVDDRPYGGGPGMLMMVQPLRDAIHAAKAAAGEGARVIYLSPQGRKLDQQGVRQLATNQKMILVCGRYEGIDERVIKTEIDEEWSIGDYVLSGGELPAMTLIDSVARFIPGVLGHQASAEEDSFADGLLDCPHFTRPEILEGMEVPAVLLSGNHAEIRRWRLKQSLGRTWLRRPELLKSLALTDEQTRLLAEFQREYQSEQQEY</sequence>
<protein>
    <recommendedName>
        <fullName evidence="1">tRNA (guanine-N(1)-)-methyltransferase</fullName>
        <ecNumber evidence="1">2.1.1.228</ecNumber>
    </recommendedName>
    <alternativeName>
        <fullName evidence="1">M1G-methyltransferase</fullName>
    </alternativeName>
    <alternativeName>
        <fullName evidence="1">tRNA [GM37] methyltransferase</fullName>
    </alternativeName>
</protein>
<feature type="chain" id="PRO_1000212230" description="tRNA (guanine-N(1)-)-methyltransferase">
    <location>
        <begin position="1"/>
        <end position="251"/>
    </location>
</feature>
<feature type="binding site" evidence="1">
    <location>
        <position position="113"/>
    </location>
    <ligand>
        <name>S-adenosyl-L-methionine</name>
        <dbReference type="ChEBI" id="CHEBI:59789"/>
    </ligand>
</feature>
<feature type="binding site" evidence="1">
    <location>
        <begin position="133"/>
        <end position="138"/>
    </location>
    <ligand>
        <name>S-adenosyl-L-methionine</name>
        <dbReference type="ChEBI" id="CHEBI:59789"/>
    </ligand>
</feature>
<name>TRMD_PECCP</name>